<organism>
    <name type="scientific">Salmonella gallinarum (strain 287/91 / NCTC 13346)</name>
    <dbReference type="NCBI Taxonomy" id="550538"/>
    <lineage>
        <taxon>Bacteria</taxon>
        <taxon>Pseudomonadati</taxon>
        <taxon>Pseudomonadota</taxon>
        <taxon>Gammaproteobacteria</taxon>
        <taxon>Enterobacterales</taxon>
        <taxon>Enterobacteriaceae</taxon>
        <taxon>Salmonella</taxon>
    </lineage>
</organism>
<name>EFPL_SALG2</name>
<gene>
    <name evidence="1" type="primary">yeiP</name>
    <name type="ordered locus">SG2249</name>
</gene>
<dbReference type="EMBL" id="AM933173">
    <property type="protein sequence ID" value="CAR38082.1"/>
    <property type="molecule type" value="Genomic_DNA"/>
</dbReference>
<dbReference type="RefSeq" id="WP_001136822.1">
    <property type="nucleotide sequence ID" value="NC_011274.1"/>
</dbReference>
<dbReference type="SMR" id="B5RC50"/>
<dbReference type="GeneID" id="66756682"/>
<dbReference type="KEGG" id="seg:SG2249"/>
<dbReference type="HOGENOM" id="CLU_074944_2_0_6"/>
<dbReference type="Proteomes" id="UP000008321">
    <property type="component" value="Chromosome"/>
</dbReference>
<dbReference type="GO" id="GO:0005829">
    <property type="term" value="C:cytosol"/>
    <property type="evidence" value="ECO:0007669"/>
    <property type="project" value="UniProtKB-ARBA"/>
</dbReference>
<dbReference type="GO" id="GO:0003746">
    <property type="term" value="F:translation elongation factor activity"/>
    <property type="evidence" value="ECO:0007669"/>
    <property type="project" value="UniProtKB-UniRule"/>
</dbReference>
<dbReference type="GO" id="GO:0043043">
    <property type="term" value="P:peptide biosynthetic process"/>
    <property type="evidence" value="ECO:0007669"/>
    <property type="project" value="InterPro"/>
</dbReference>
<dbReference type="CDD" id="cd04470">
    <property type="entry name" value="S1_EF-P_repeat_1"/>
    <property type="match status" value="1"/>
</dbReference>
<dbReference type="CDD" id="cd05794">
    <property type="entry name" value="S1_EF-P_repeat_2"/>
    <property type="match status" value="1"/>
</dbReference>
<dbReference type="FunFam" id="2.40.50.140:FF:000004">
    <property type="entry name" value="Elongation factor P"/>
    <property type="match status" value="1"/>
</dbReference>
<dbReference type="FunFam" id="2.30.30.30:FF:000011">
    <property type="entry name" value="Elongation factor P-like protein"/>
    <property type="match status" value="1"/>
</dbReference>
<dbReference type="FunFam" id="2.40.50.140:FF:000053">
    <property type="entry name" value="Elongation factor P-like protein"/>
    <property type="match status" value="1"/>
</dbReference>
<dbReference type="Gene3D" id="2.30.30.30">
    <property type="match status" value="1"/>
</dbReference>
<dbReference type="Gene3D" id="2.40.50.140">
    <property type="entry name" value="Nucleic acid-binding proteins"/>
    <property type="match status" value="2"/>
</dbReference>
<dbReference type="HAMAP" id="MF_00646">
    <property type="entry name" value="EFP"/>
    <property type="match status" value="1"/>
</dbReference>
<dbReference type="InterPro" id="IPR015365">
    <property type="entry name" value="Elong-fact-P_C"/>
</dbReference>
<dbReference type="InterPro" id="IPR012340">
    <property type="entry name" value="NA-bd_OB-fold"/>
</dbReference>
<dbReference type="InterPro" id="IPR014722">
    <property type="entry name" value="Rib_uL2_dom2"/>
</dbReference>
<dbReference type="InterPro" id="IPR020599">
    <property type="entry name" value="Transl_elong_fac_P/YeiP"/>
</dbReference>
<dbReference type="InterPro" id="IPR013185">
    <property type="entry name" value="Transl_elong_KOW-like"/>
</dbReference>
<dbReference type="InterPro" id="IPR011897">
    <property type="entry name" value="Transl_elong_p-like_YeiP"/>
</dbReference>
<dbReference type="InterPro" id="IPR001059">
    <property type="entry name" value="Transl_elong_P/YeiP_cen"/>
</dbReference>
<dbReference type="InterPro" id="IPR013852">
    <property type="entry name" value="Transl_elong_P/YeiP_CS"/>
</dbReference>
<dbReference type="InterPro" id="IPR008991">
    <property type="entry name" value="Translation_prot_SH3-like_sf"/>
</dbReference>
<dbReference type="NCBIfam" id="NF001810">
    <property type="entry name" value="PRK00529.1"/>
    <property type="match status" value="1"/>
</dbReference>
<dbReference type="NCBIfam" id="NF003392">
    <property type="entry name" value="PRK04542.1"/>
    <property type="match status" value="1"/>
</dbReference>
<dbReference type="NCBIfam" id="TIGR02178">
    <property type="entry name" value="yeiP"/>
    <property type="match status" value="1"/>
</dbReference>
<dbReference type="PANTHER" id="PTHR30053">
    <property type="entry name" value="ELONGATION FACTOR P"/>
    <property type="match status" value="1"/>
</dbReference>
<dbReference type="PANTHER" id="PTHR30053:SF14">
    <property type="entry name" value="TRANSLATION ELONGATION FACTOR KOW-LIKE DOMAIN-CONTAINING PROTEIN"/>
    <property type="match status" value="1"/>
</dbReference>
<dbReference type="Pfam" id="PF01132">
    <property type="entry name" value="EFP"/>
    <property type="match status" value="1"/>
</dbReference>
<dbReference type="Pfam" id="PF08207">
    <property type="entry name" value="EFP_N"/>
    <property type="match status" value="1"/>
</dbReference>
<dbReference type="Pfam" id="PF09285">
    <property type="entry name" value="Elong-fact-P_C"/>
    <property type="match status" value="1"/>
</dbReference>
<dbReference type="PIRSF" id="PIRSF005901">
    <property type="entry name" value="EF-P"/>
    <property type="match status" value="1"/>
</dbReference>
<dbReference type="SMART" id="SM01185">
    <property type="entry name" value="EFP"/>
    <property type="match status" value="1"/>
</dbReference>
<dbReference type="SMART" id="SM00841">
    <property type="entry name" value="Elong-fact-P_C"/>
    <property type="match status" value="1"/>
</dbReference>
<dbReference type="SUPFAM" id="SSF50249">
    <property type="entry name" value="Nucleic acid-binding proteins"/>
    <property type="match status" value="2"/>
</dbReference>
<dbReference type="SUPFAM" id="SSF50104">
    <property type="entry name" value="Translation proteins SH3-like domain"/>
    <property type="match status" value="1"/>
</dbReference>
<dbReference type="PROSITE" id="PS01275">
    <property type="entry name" value="EFP"/>
    <property type="match status" value="1"/>
</dbReference>
<protein>
    <recommendedName>
        <fullName evidence="1">Elongation factor P-like protein</fullName>
    </recommendedName>
</protein>
<reference key="1">
    <citation type="journal article" date="2008" name="Genome Res.">
        <title>Comparative genome analysis of Salmonella enteritidis PT4 and Salmonella gallinarum 287/91 provides insights into evolutionary and host adaptation pathways.</title>
        <authorList>
            <person name="Thomson N.R."/>
            <person name="Clayton D.J."/>
            <person name="Windhorst D."/>
            <person name="Vernikos G."/>
            <person name="Davidson S."/>
            <person name="Churcher C."/>
            <person name="Quail M.A."/>
            <person name="Stevens M."/>
            <person name="Jones M.A."/>
            <person name="Watson M."/>
            <person name="Barron A."/>
            <person name="Layton A."/>
            <person name="Pickard D."/>
            <person name="Kingsley R.A."/>
            <person name="Bignell A."/>
            <person name="Clark L."/>
            <person name="Harris B."/>
            <person name="Ormond D."/>
            <person name="Abdellah Z."/>
            <person name="Brooks K."/>
            <person name="Cherevach I."/>
            <person name="Chillingworth T."/>
            <person name="Woodward J."/>
            <person name="Norberczak H."/>
            <person name="Lord A."/>
            <person name="Arrowsmith C."/>
            <person name="Jagels K."/>
            <person name="Moule S."/>
            <person name="Mungall K."/>
            <person name="Saunders M."/>
            <person name="Whitehead S."/>
            <person name="Chabalgoity J.A."/>
            <person name="Maskell D."/>
            <person name="Humphreys T."/>
            <person name="Roberts M."/>
            <person name="Barrow P.A."/>
            <person name="Dougan G."/>
            <person name="Parkhill J."/>
        </authorList>
    </citation>
    <scope>NUCLEOTIDE SEQUENCE [LARGE SCALE GENOMIC DNA]</scope>
    <source>
        <strain>287/91 / NCTC 13346</strain>
    </source>
</reference>
<accession>B5RC50</accession>
<evidence type="ECO:0000255" key="1">
    <source>
        <dbReference type="HAMAP-Rule" id="MF_00646"/>
    </source>
</evidence>
<sequence length="190" mass="21386">MPRANEIKKGMVLNYNGKLLIVKDIDIQSPTARGAATLYKMRFSDVRTGLKVEERFKGDDIVDTVTLSRRGVDFSYVDGNEYVFMDKEDYTPYTFTKDQIEEELLFMPEGGMPDMQVLTWDGQLLALELPQTVDLEIVETAPGIKGASASARNKPATLSTGLVIQVPEYLSAGEKIRIHIEERRYMGRAD</sequence>
<proteinExistence type="inferred from homology"/>
<comment type="similarity">
    <text evidence="1">Belongs to the elongation factor P family.</text>
</comment>
<feature type="chain" id="PRO_1000130923" description="Elongation factor P-like protein">
    <location>
        <begin position="1"/>
        <end position="190"/>
    </location>
</feature>